<keyword id="KW-0007">Acetylation</keyword>
<keyword id="KW-0041">Annexin</keyword>
<keyword id="KW-0106">Calcium</keyword>
<keyword id="KW-0111">Calcium/phospholipid-binding</keyword>
<keyword id="KW-0968">Cytoplasmic vesicle</keyword>
<keyword id="KW-0472">Membrane</keyword>
<keyword id="KW-0597">Phosphoprotein</keyword>
<keyword id="KW-1185">Reference proteome</keyword>
<keyword id="KW-0677">Repeat</keyword>
<organism>
    <name type="scientific">Mus musculus</name>
    <name type="common">Mouse</name>
    <dbReference type="NCBI Taxonomy" id="10090"/>
    <lineage>
        <taxon>Eukaryota</taxon>
        <taxon>Metazoa</taxon>
        <taxon>Chordata</taxon>
        <taxon>Craniata</taxon>
        <taxon>Vertebrata</taxon>
        <taxon>Euteleostomi</taxon>
        <taxon>Mammalia</taxon>
        <taxon>Eutheria</taxon>
        <taxon>Euarchontoglires</taxon>
        <taxon>Glires</taxon>
        <taxon>Rodentia</taxon>
        <taxon>Myomorpha</taxon>
        <taxon>Muroidea</taxon>
        <taxon>Muridae</taxon>
        <taxon>Murinae</taxon>
        <taxon>Mus</taxon>
        <taxon>Mus</taxon>
    </lineage>
</organism>
<evidence type="ECO:0000250" key="1"/>
<evidence type="ECO:0000250" key="2">
    <source>
        <dbReference type="UniProtKB" id="P08132"/>
    </source>
</evidence>
<evidence type="ECO:0000250" key="3">
    <source>
        <dbReference type="UniProtKB" id="P09525"/>
    </source>
</evidence>
<evidence type="ECO:0000250" key="4">
    <source>
        <dbReference type="UniProtKB" id="P50994"/>
    </source>
</evidence>
<evidence type="ECO:0000255" key="5">
    <source>
        <dbReference type="PROSITE-ProRule" id="PRU01245"/>
    </source>
</evidence>
<evidence type="ECO:0000305" key="6"/>
<proteinExistence type="evidence at protein level"/>
<comment type="function">
    <text evidence="1">Calcium/phospholipid-binding protein which promotes membrane fusion and is involved in exocytosis.</text>
</comment>
<comment type="subcellular location">
    <subcellularLocation>
        <location evidence="4">Zymogen granule membrane</location>
        <topology evidence="4">Peripheral membrane protein</topology>
    </subcellularLocation>
</comment>
<comment type="domain">
    <text>A pair of annexin repeats may form one binding site for calcium and phospholipid.</text>
</comment>
<comment type="miscellaneous">
    <text evidence="1">Seems to bind one calcium ion with high affinity.</text>
</comment>
<comment type="similarity">
    <text evidence="5 6">Belongs to the annexin family.</text>
</comment>
<name>ANXA4_MOUSE</name>
<gene>
    <name type="primary">Anxa4</name>
    <name type="synonym">Anx4</name>
</gene>
<protein>
    <recommendedName>
        <fullName>Annexin A4</fullName>
    </recommendedName>
    <alternativeName>
        <fullName>Annexin IV</fullName>
    </alternativeName>
    <alternativeName>
        <fullName>Annexin-4</fullName>
    </alternativeName>
</protein>
<dbReference type="EMBL" id="U72941">
    <property type="protein sequence ID" value="AAB40697.1"/>
    <property type="molecule type" value="mRNA"/>
</dbReference>
<dbReference type="EMBL" id="AK132293">
    <property type="protein sequence ID" value="BAE21085.1"/>
    <property type="molecule type" value="mRNA"/>
</dbReference>
<dbReference type="EMBL" id="AK150486">
    <property type="protein sequence ID" value="BAE29602.1"/>
    <property type="molecule type" value="mRNA"/>
</dbReference>
<dbReference type="EMBL" id="AK150614">
    <property type="protein sequence ID" value="BAE29705.1"/>
    <property type="molecule type" value="mRNA"/>
</dbReference>
<dbReference type="EMBL" id="AK151054">
    <property type="protein sequence ID" value="BAE30071.1"/>
    <property type="molecule type" value="mRNA"/>
</dbReference>
<dbReference type="EMBL" id="AK151236">
    <property type="protein sequence ID" value="BAE30228.1"/>
    <property type="molecule type" value="mRNA"/>
</dbReference>
<dbReference type="EMBL" id="AK167338">
    <property type="protein sequence ID" value="BAE39439.1"/>
    <property type="molecule type" value="mRNA"/>
</dbReference>
<dbReference type="EMBL" id="AK168390">
    <property type="protein sequence ID" value="BAE40316.1"/>
    <property type="molecule type" value="mRNA"/>
</dbReference>
<dbReference type="EMBL" id="AK168487">
    <property type="protein sequence ID" value="BAE40374.1"/>
    <property type="molecule type" value="mRNA"/>
</dbReference>
<dbReference type="EMBL" id="AK168917">
    <property type="protein sequence ID" value="BAE40730.1"/>
    <property type="molecule type" value="mRNA"/>
</dbReference>
<dbReference type="EMBL" id="AK170447">
    <property type="protein sequence ID" value="BAE41805.1"/>
    <property type="molecule type" value="mRNA"/>
</dbReference>
<dbReference type="EMBL" id="CH466523">
    <property type="protein sequence ID" value="EDK99195.1"/>
    <property type="molecule type" value="Genomic_DNA"/>
</dbReference>
<dbReference type="CCDS" id="CCDS39543.1"/>
<dbReference type="RefSeq" id="NP_001318049.1">
    <property type="nucleotide sequence ID" value="NM_001331120.1"/>
</dbReference>
<dbReference type="RefSeq" id="NP_001396366.1">
    <property type="nucleotide sequence ID" value="NM_001409437.1"/>
</dbReference>
<dbReference type="RefSeq" id="NP_001396367.1">
    <property type="nucleotide sequence ID" value="NM_001409438.1"/>
</dbReference>
<dbReference type="RefSeq" id="NP_001396368.1">
    <property type="nucleotide sequence ID" value="NM_001409439.1"/>
</dbReference>
<dbReference type="RefSeq" id="NP_001396371.1">
    <property type="nucleotide sequence ID" value="NM_001409442.1"/>
</dbReference>
<dbReference type="RefSeq" id="NP_038499.2">
    <property type="nucleotide sequence ID" value="NM_013471.3"/>
</dbReference>
<dbReference type="RefSeq" id="XP_006505460.1">
    <property type="nucleotide sequence ID" value="XM_006505397.2"/>
</dbReference>
<dbReference type="RefSeq" id="XP_006505461.1">
    <property type="nucleotide sequence ID" value="XM_006505398.2"/>
</dbReference>
<dbReference type="RefSeq" id="XP_036021654.1">
    <property type="nucleotide sequence ID" value="XM_036165761.1"/>
</dbReference>
<dbReference type="SMR" id="P97429"/>
<dbReference type="BioGRID" id="198110">
    <property type="interactions" value="6"/>
</dbReference>
<dbReference type="FunCoup" id="P97429">
    <property type="interactions" value="1779"/>
</dbReference>
<dbReference type="IntAct" id="P97429">
    <property type="interactions" value="6"/>
</dbReference>
<dbReference type="STRING" id="10090.ENSMUSP00000109305"/>
<dbReference type="GlyGen" id="P97429">
    <property type="glycosylation" value="2 sites, 1 N-linked glycan (1 site), 1 O-linked glycan (1 site)"/>
</dbReference>
<dbReference type="iPTMnet" id="P97429"/>
<dbReference type="PhosphoSitePlus" id="P97429"/>
<dbReference type="SwissPalm" id="P97429"/>
<dbReference type="jPOST" id="P97429"/>
<dbReference type="PaxDb" id="10090-ENSMUSP00000109305"/>
<dbReference type="PeptideAtlas" id="P97429"/>
<dbReference type="ProteomicsDB" id="281776"/>
<dbReference type="Antibodypedia" id="1552">
    <property type="antibodies" value="509 antibodies from 42 providers"/>
</dbReference>
<dbReference type="DNASU" id="11746"/>
<dbReference type="Ensembl" id="ENSMUST00000001187.15">
    <property type="protein sequence ID" value="ENSMUSP00000001187.9"/>
    <property type="gene ID" value="ENSMUSG00000029994.18"/>
</dbReference>
<dbReference type="Ensembl" id="ENSMUST00000113675.8">
    <property type="protein sequence ID" value="ENSMUSP00000109305.2"/>
    <property type="gene ID" value="ENSMUSG00000029994.18"/>
</dbReference>
<dbReference type="GeneID" id="11746"/>
<dbReference type="KEGG" id="mmu:11746"/>
<dbReference type="UCSC" id="uc009csm.2">
    <property type="organism name" value="mouse"/>
</dbReference>
<dbReference type="AGR" id="MGI:88030"/>
<dbReference type="CTD" id="307"/>
<dbReference type="MGI" id="MGI:88030">
    <property type="gene designation" value="Anxa4"/>
</dbReference>
<dbReference type="VEuPathDB" id="HostDB:ENSMUSG00000029994"/>
<dbReference type="eggNOG" id="KOG0819">
    <property type="taxonomic scope" value="Eukaryota"/>
</dbReference>
<dbReference type="GeneTree" id="ENSGT00940000156575"/>
<dbReference type="HOGENOM" id="CLU_025300_0_0_1"/>
<dbReference type="InParanoid" id="P97429"/>
<dbReference type="OMA" id="ASNWVIM"/>
<dbReference type="OrthoDB" id="37886at2759"/>
<dbReference type="PhylomeDB" id="P97429"/>
<dbReference type="TreeFam" id="TF105452"/>
<dbReference type="BioGRID-ORCS" id="11746">
    <property type="hits" value="0 hits in 78 CRISPR screens"/>
</dbReference>
<dbReference type="ChiTaRS" id="Anxa4">
    <property type="organism name" value="mouse"/>
</dbReference>
<dbReference type="PRO" id="PR:P97429"/>
<dbReference type="Proteomes" id="UP000000589">
    <property type="component" value="Chromosome 6"/>
</dbReference>
<dbReference type="RNAct" id="P97429">
    <property type="molecule type" value="protein"/>
</dbReference>
<dbReference type="Bgee" id="ENSMUSG00000029994">
    <property type="expression patterns" value="Expressed in small intestine Peyer's patch and 237 other cell types or tissues"/>
</dbReference>
<dbReference type="ExpressionAtlas" id="P97429">
    <property type="expression patterns" value="baseline and differential"/>
</dbReference>
<dbReference type="GO" id="GO:0016324">
    <property type="term" value="C:apical plasma membrane"/>
    <property type="evidence" value="ECO:0000247"/>
    <property type="project" value="MGI"/>
</dbReference>
<dbReference type="GO" id="GO:0009986">
    <property type="term" value="C:cell surface"/>
    <property type="evidence" value="ECO:0007669"/>
    <property type="project" value="Ensembl"/>
</dbReference>
<dbReference type="GO" id="GO:0062023">
    <property type="term" value="C:collagen-containing extracellular matrix"/>
    <property type="evidence" value="ECO:0007005"/>
    <property type="project" value="BHF-UCL"/>
</dbReference>
<dbReference type="GO" id="GO:0031965">
    <property type="term" value="C:nuclear membrane"/>
    <property type="evidence" value="ECO:0007669"/>
    <property type="project" value="Ensembl"/>
</dbReference>
<dbReference type="GO" id="GO:0048471">
    <property type="term" value="C:perinuclear region of cytoplasm"/>
    <property type="evidence" value="ECO:0007669"/>
    <property type="project" value="Ensembl"/>
</dbReference>
<dbReference type="GO" id="GO:0042589">
    <property type="term" value="C:zymogen granule membrane"/>
    <property type="evidence" value="ECO:0007669"/>
    <property type="project" value="UniProtKB-SubCell"/>
</dbReference>
<dbReference type="GO" id="GO:0005509">
    <property type="term" value="F:calcium ion binding"/>
    <property type="evidence" value="ECO:0007669"/>
    <property type="project" value="Ensembl"/>
</dbReference>
<dbReference type="GO" id="GO:0005544">
    <property type="term" value="F:calcium-dependent phospholipid binding"/>
    <property type="evidence" value="ECO:0007669"/>
    <property type="project" value="UniProtKB-KW"/>
</dbReference>
<dbReference type="GO" id="GO:0048306">
    <property type="term" value="F:calcium-dependent protein binding"/>
    <property type="evidence" value="ECO:0007669"/>
    <property type="project" value="Ensembl"/>
</dbReference>
<dbReference type="GO" id="GO:0042802">
    <property type="term" value="F:identical protein binding"/>
    <property type="evidence" value="ECO:0007669"/>
    <property type="project" value="Ensembl"/>
</dbReference>
<dbReference type="GO" id="GO:0051059">
    <property type="term" value="F:NF-kappaB binding"/>
    <property type="evidence" value="ECO:0007669"/>
    <property type="project" value="Ensembl"/>
</dbReference>
<dbReference type="GO" id="GO:0030855">
    <property type="term" value="P:epithelial cell differentiation"/>
    <property type="evidence" value="ECO:0007669"/>
    <property type="project" value="Ensembl"/>
</dbReference>
<dbReference type="GO" id="GO:0001822">
    <property type="term" value="P:kidney development"/>
    <property type="evidence" value="ECO:0000247"/>
    <property type="project" value="MGI"/>
</dbReference>
<dbReference type="GO" id="GO:0032717">
    <property type="term" value="P:negative regulation of interleukin-8 production"/>
    <property type="evidence" value="ECO:0007669"/>
    <property type="project" value="Ensembl"/>
</dbReference>
<dbReference type="GO" id="GO:0007219">
    <property type="term" value="P:Notch signaling pathway"/>
    <property type="evidence" value="ECO:0000314"/>
    <property type="project" value="MGI"/>
</dbReference>
<dbReference type="GO" id="GO:0006357">
    <property type="term" value="P:regulation of transcription by RNA polymerase II"/>
    <property type="evidence" value="ECO:0007669"/>
    <property type="project" value="Ensembl"/>
</dbReference>
<dbReference type="FunFam" id="1.10.220.10:FF:000002">
    <property type="entry name" value="Annexin"/>
    <property type="match status" value="1"/>
</dbReference>
<dbReference type="FunFam" id="1.10.220.10:FF:000003">
    <property type="entry name" value="Annexin"/>
    <property type="match status" value="1"/>
</dbReference>
<dbReference type="FunFam" id="1.10.220.10:FF:000004">
    <property type="entry name" value="Annexin"/>
    <property type="match status" value="1"/>
</dbReference>
<dbReference type="FunFam" id="1.10.220.10:FF:000022">
    <property type="entry name" value="Annexin A5"/>
    <property type="match status" value="1"/>
</dbReference>
<dbReference type="Gene3D" id="1.10.220.10">
    <property type="entry name" value="Annexin"/>
    <property type="match status" value="4"/>
</dbReference>
<dbReference type="InterPro" id="IPR001464">
    <property type="entry name" value="Annexin"/>
</dbReference>
<dbReference type="InterPro" id="IPR018502">
    <property type="entry name" value="Annexin_repeat"/>
</dbReference>
<dbReference type="InterPro" id="IPR018252">
    <property type="entry name" value="Annexin_repeat_CS"/>
</dbReference>
<dbReference type="InterPro" id="IPR037104">
    <property type="entry name" value="Annexin_sf"/>
</dbReference>
<dbReference type="InterPro" id="IPR002391">
    <property type="entry name" value="ANX4"/>
</dbReference>
<dbReference type="PANTHER" id="PTHR10502">
    <property type="entry name" value="ANNEXIN"/>
    <property type="match status" value="1"/>
</dbReference>
<dbReference type="PANTHER" id="PTHR10502:SF28">
    <property type="entry name" value="ANNEXIN A4"/>
    <property type="match status" value="1"/>
</dbReference>
<dbReference type="Pfam" id="PF00191">
    <property type="entry name" value="Annexin"/>
    <property type="match status" value="4"/>
</dbReference>
<dbReference type="PRINTS" id="PR00196">
    <property type="entry name" value="ANNEXIN"/>
</dbReference>
<dbReference type="PRINTS" id="PR00200">
    <property type="entry name" value="ANNEXINIV"/>
</dbReference>
<dbReference type="SMART" id="SM00335">
    <property type="entry name" value="ANX"/>
    <property type="match status" value="4"/>
</dbReference>
<dbReference type="SUPFAM" id="SSF47874">
    <property type="entry name" value="Annexin"/>
    <property type="match status" value="1"/>
</dbReference>
<dbReference type="PROSITE" id="PS00223">
    <property type="entry name" value="ANNEXIN_1"/>
    <property type="match status" value="4"/>
</dbReference>
<dbReference type="PROSITE" id="PS51897">
    <property type="entry name" value="ANNEXIN_2"/>
    <property type="match status" value="4"/>
</dbReference>
<accession>P97429</accession>
<accession>Q3UCL0</accession>
<reference key="1">
    <citation type="submission" date="1997-01" db="EMBL/GenBank/DDBJ databases">
        <authorList>
            <person name="Sable C.L."/>
            <person name="Shannon J."/>
            <person name="Riches D.W.H."/>
        </authorList>
    </citation>
    <scope>NUCLEOTIDE SEQUENCE [MRNA]</scope>
    <source>
        <strain>C3H/HeJ</strain>
    </source>
</reference>
<reference key="2">
    <citation type="journal article" date="2005" name="Science">
        <title>The transcriptional landscape of the mammalian genome.</title>
        <authorList>
            <person name="Carninci P."/>
            <person name="Kasukawa T."/>
            <person name="Katayama S."/>
            <person name="Gough J."/>
            <person name="Frith M.C."/>
            <person name="Maeda N."/>
            <person name="Oyama R."/>
            <person name="Ravasi T."/>
            <person name="Lenhard B."/>
            <person name="Wells C."/>
            <person name="Kodzius R."/>
            <person name="Shimokawa K."/>
            <person name="Bajic V.B."/>
            <person name="Brenner S.E."/>
            <person name="Batalov S."/>
            <person name="Forrest A.R."/>
            <person name="Zavolan M."/>
            <person name="Davis M.J."/>
            <person name="Wilming L.G."/>
            <person name="Aidinis V."/>
            <person name="Allen J.E."/>
            <person name="Ambesi-Impiombato A."/>
            <person name="Apweiler R."/>
            <person name="Aturaliya R.N."/>
            <person name="Bailey T.L."/>
            <person name="Bansal M."/>
            <person name="Baxter L."/>
            <person name="Beisel K.W."/>
            <person name="Bersano T."/>
            <person name="Bono H."/>
            <person name="Chalk A.M."/>
            <person name="Chiu K.P."/>
            <person name="Choudhary V."/>
            <person name="Christoffels A."/>
            <person name="Clutterbuck D.R."/>
            <person name="Crowe M.L."/>
            <person name="Dalla E."/>
            <person name="Dalrymple B.P."/>
            <person name="de Bono B."/>
            <person name="Della Gatta G."/>
            <person name="di Bernardo D."/>
            <person name="Down T."/>
            <person name="Engstrom P."/>
            <person name="Fagiolini M."/>
            <person name="Faulkner G."/>
            <person name="Fletcher C.F."/>
            <person name="Fukushima T."/>
            <person name="Furuno M."/>
            <person name="Futaki S."/>
            <person name="Gariboldi M."/>
            <person name="Georgii-Hemming P."/>
            <person name="Gingeras T.R."/>
            <person name="Gojobori T."/>
            <person name="Green R.E."/>
            <person name="Gustincich S."/>
            <person name="Harbers M."/>
            <person name="Hayashi Y."/>
            <person name="Hensch T.K."/>
            <person name="Hirokawa N."/>
            <person name="Hill D."/>
            <person name="Huminiecki L."/>
            <person name="Iacono M."/>
            <person name="Ikeo K."/>
            <person name="Iwama A."/>
            <person name="Ishikawa T."/>
            <person name="Jakt M."/>
            <person name="Kanapin A."/>
            <person name="Katoh M."/>
            <person name="Kawasawa Y."/>
            <person name="Kelso J."/>
            <person name="Kitamura H."/>
            <person name="Kitano H."/>
            <person name="Kollias G."/>
            <person name="Krishnan S.P."/>
            <person name="Kruger A."/>
            <person name="Kummerfeld S.K."/>
            <person name="Kurochkin I.V."/>
            <person name="Lareau L.F."/>
            <person name="Lazarevic D."/>
            <person name="Lipovich L."/>
            <person name="Liu J."/>
            <person name="Liuni S."/>
            <person name="McWilliam S."/>
            <person name="Madan Babu M."/>
            <person name="Madera M."/>
            <person name="Marchionni L."/>
            <person name="Matsuda H."/>
            <person name="Matsuzawa S."/>
            <person name="Miki H."/>
            <person name="Mignone F."/>
            <person name="Miyake S."/>
            <person name="Morris K."/>
            <person name="Mottagui-Tabar S."/>
            <person name="Mulder N."/>
            <person name="Nakano N."/>
            <person name="Nakauchi H."/>
            <person name="Ng P."/>
            <person name="Nilsson R."/>
            <person name="Nishiguchi S."/>
            <person name="Nishikawa S."/>
            <person name="Nori F."/>
            <person name="Ohara O."/>
            <person name="Okazaki Y."/>
            <person name="Orlando V."/>
            <person name="Pang K.C."/>
            <person name="Pavan W.J."/>
            <person name="Pavesi G."/>
            <person name="Pesole G."/>
            <person name="Petrovsky N."/>
            <person name="Piazza S."/>
            <person name="Reed J."/>
            <person name="Reid J.F."/>
            <person name="Ring B.Z."/>
            <person name="Ringwald M."/>
            <person name="Rost B."/>
            <person name="Ruan Y."/>
            <person name="Salzberg S.L."/>
            <person name="Sandelin A."/>
            <person name="Schneider C."/>
            <person name="Schoenbach C."/>
            <person name="Sekiguchi K."/>
            <person name="Semple C.A."/>
            <person name="Seno S."/>
            <person name="Sessa L."/>
            <person name="Sheng Y."/>
            <person name="Shibata Y."/>
            <person name="Shimada H."/>
            <person name="Shimada K."/>
            <person name="Silva D."/>
            <person name="Sinclair B."/>
            <person name="Sperling S."/>
            <person name="Stupka E."/>
            <person name="Sugiura K."/>
            <person name="Sultana R."/>
            <person name="Takenaka Y."/>
            <person name="Taki K."/>
            <person name="Tammoja K."/>
            <person name="Tan S.L."/>
            <person name="Tang S."/>
            <person name="Taylor M.S."/>
            <person name="Tegner J."/>
            <person name="Teichmann S.A."/>
            <person name="Ueda H.R."/>
            <person name="van Nimwegen E."/>
            <person name="Verardo R."/>
            <person name="Wei C.L."/>
            <person name="Yagi K."/>
            <person name="Yamanishi H."/>
            <person name="Zabarovsky E."/>
            <person name="Zhu S."/>
            <person name="Zimmer A."/>
            <person name="Hide W."/>
            <person name="Bult C."/>
            <person name="Grimmond S.M."/>
            <person name="Teasdale R.D."/>
            <person name="Liu E.T."/>
            <person name="Brusic V."/>
            <person name="Quackenbush J."/>
            <person name="Wahlestedt C."/>
            <person name="Mattick J.S."/>
            <person name="Hume D.A."/>
            <person name="Kai C."/>
            <person name="Sasaki D."/>
            <person name="Tomaru Y."/>
            <person name="Fukuda S."/>
            <person name="Kanamori-Katayama M."/>
            <person name="Suzuki M."/>
            <person name="Aoki J."/>
            <person name="Arakawa T."/>
            <person name="Iida J."/>
            <person name="Imamura K."/>
            <person name="Itoh M."/>
            <person name="Kato T."/>
            <person name="Kawaji H."/>
            <person name="Kawagashira N."/>
            <person name="Kawashima T."/>
            <person name="Kojima M."/>
            <person name="Kondo S."/>
            <person name="Konno H."/>
            <person name="Nakano K."/>
            <person name="Ninomiya N."/>
            <person name="Nishio T."/>
            <person name="Okada M."/>
            <person name="Plessy C."/>
            <person name="Shibata K."/>
            <person name="Shiraki T."/>
            <person name="Suzuki S."/>
            <person name="Tagami M."/>
            <person name="Waki K."/>
            <person name="Watahiki A."/>
            <person name="Okamura-Oho Y."/>
            <person name="Suzuki H."/>
            <person name="Kawai J."/>
            <person name="Hayashizaki Y."/>
        </authorList>
    </citation>
    <scope>NUCLEOTIDE SEQUENCE [LARGE SCALE MRNA]</scope>
    <source>
        <strain>C57BL/6J</strain>
        <strain>NOD</strain>
        <tissue>Bone marrow</tissue>
        <tissue>Extraembryonic tissue</tissue>
        <tissue>Heart</tissue>
        <tissue>Kidney</tissue>
        <tissue>Placenta</tissue>
        <tissue>Stomach</tissue>
    </source>
</reference>
<reference key="3">
    <citation type="submission" date="2005-07" db="EMBL/GenBank/DDBJ databases">
        <authorList>
            <person name="Mural R.J."/>
            <person name="Adams M.D."/>
            <person name="Myers E.W."/>
            <person name="Smith H.O."/>
            <person name="Venter J.C."/>
        </authorList>
    </citation>
    <scope>NUCLEOTIDE SEQUENCE [LARGE SCALE GENOMIC DNA]</scope>
</reference>
<reference key="4">
    <citation type="journal article" date="2010" name="Cell">
        <title>A tissue-specific atlas of mouse protein phosphorylation and expression.</title>
        <authorList>
            <person name="Huttlin E.L."/>
            <person name="Jedrychowski M.P."/>
            <person name="Elias J.E."/>
            <person name="Goswami T."/>
            <person name="Rad R."/>
            <person name="Beausoleil S.A."/>
            <person name="Villen J."/>
            <person name="Haas W."/>
            <person name="Sowa M.E."/>
            <person name="Gygi S.P."/>
        </authorList>
    </citation>
    <scope>IDENTIFICATION BY MASS SPECTROMETRY [LARGE SCALE ANALYSIS]</scope>
    <source>
        <tissue>Brain</tissue>
        <tissue>Brown adipose tissue</tissue>
        <tissue>Heart</tissue>
        <tissue>Kidney</tissue>
        <tissue>Liver</tissue>
        <tissue>Lung</tissue>
        <tissue>Pancreas</tissue>
        <tissue>Spleen</tissue>
        <tissue>Testis</tissue>
    </source>
</reference>
<feature type="chain" id="PRO_0000067483" description="Annexin A4">
    <location>
        <begin position="1"/>
        <end position="319"/>
    </location>
</feature>
<feature type="repeat" description="Annexin 1" evidence="5">
    <location>
        <begin position="14"/>
        <end position="85"/>
    </location>
</feature>
<feature type="repeat" description="Annexin 2" evidence="5">
    <location>
        <begin position="86"/>
        <end position="157"/>
    </location>
</feature>
<feature type="repeat" description="Annexin 3" evidence="5">
    <location>
        <begin position="169"/>
        <end position="241"/>
    </location>
</feature>
<feature type="repeat" description="Annexin 4" evidence="5">
    <location>
        <begin position="245"/>
        <end position="316"/>
    </location>
</feature>
<feature type="modified residue" description="Phosphothreonine" evidence="2">
    <location>
        <position position="7"/>
    </location>
</feature>
<feature type="modified residue" description="Phosphoserine" evidence="3">
    <location>
        <position position="12"/>
    </location>
</feature>
<feature type="modified residue" description="N6-acetyllysine" evidence="3">
    <location>
        <position position="213"/>
    </location>
</feature>
<feature type="modified residue" description="N6-acetyllysine" evidence="3">
    <location>
        <position position="293"/>
    </location>
</feature>
<feature type="modified residue" description="N6-acetyllysine" evidence="3">
    <location>
        <position position="300"/>
    </location>
</feature>
<feature type="sequence conflict" description="In Ref. 1; AAB40697." evidence="6" ref="1">
    <original>S</original>
    <variation>F</variation>
    <location>
        <position position="154"/>
    </location>
</feature>
<feature type="sequence conflict" description="In Ref. 1; AAB40697." evidence="6" ref="1">
    <original>V</original>
    <variation>I</variation>
    <location>
        <position position="313"/>
    </location>
</feature>
<sequence>MEAKGGTVKAASGFNATEDAQTLRKAMKGLGTDEDAIIGILAYRNTAQRQEIRSAYKSTIGRDLIEDLKSELSSNFEQVILGLMTPTVLYDVQELRRAMKGAGTDEGCLIEILASRTPEEIRRINQTYQQQYGRSLEEDICSDTSFMFQRVLVSLSAAGRDEGNYLDDALMKQDAQELYEAGEKRWGTDEVKFLSILCSRNRNHLLHVFDEYKRISQKDIEQSIKSETSGSFEDALLAIVKCMRSKPSYFAERLYKSMKGLGTDDNTLIRVMVSRAEIDMLDIRASFKRLYGKSLYSFIKGDTSGDYRKVLLVLCGGDD</sequence>